<proteinExistence type="inferred from homology"/>
<protein>
    <recommendedName>
        <fullName evidence="1">Large ribosomal subunit protein bL36B</fullName>
    </recommendedName>
    <alternativeName>
        <fullName evidence="2">50S ribosomal protein L36 2</fullName>
    </alternativeName>
</protein>
<name>RL362_VIBC3</name>
<dbReference type="EMBL" id="CP000627">
    <property type="protein sequence ID" value="ABQ21957.1"/>
    <property type="molecule type" value="Genomic_DNA"/>
</dbReference>
<dbReference type="EMBL" id="CP001235">
    <property type="protein sequence ID" value="ACP10674.1"/>
    <property type="molecule type" value="Genomic_DNA"/>
</dbReference>
<dbReference type="RefSeq" id="WP_000868186.1">
    <property type="nucleotide sequence ID" value="NZ_JAACZH010000007.1"/>
</dbReference>
<dbReference type="SMR" id="A5F559"/>
<dbReference type="GeneID" id="97171202"/>
<dbReference type="KEGG" id="vco:VC0395_A2153"/>
<dbReference type="KEGG" id="vcr:VC395_2688"/>
<dbReference type="PATRIC" id="fig|345073.21.peg.2588"/>
<dbReference type="eggNOG" id="COG0257">
    <property type="taxonomic scope" value="Bacteria"/>
</dbReference>
<dbReference type="HOGENOM" id="CLU_135723_6_2_6"/>
<dbReference type="OrthoDB" id="9802520at2"/>
<dbReference type="Proteomes" id="UP000000249">
    <property type="component" value="Chromosome 2"/>
</dbReference>
<dbReference type="GO" id="GO:0005737">
    <property type="term" value="C:cytoplasm"/>
    <property type="evidence" value="ECO:0007669"/>
    <property type="project" value="UniProtKB-ARBA"/>
</dbReference>
<dbReference type="GO" id="GO:1990904">
    <property type="term" value="C:ribonucleoprotein complex"/>
    <property type="evidence" value="ECO:0007669"/>
    <property type="project" value="UniProtKB-KW"/>
</dbReference>
<dbReference type="GO" id="GO:0005840">
    <property type="term" value="C:ribosome"/>
    <property type="evidence" value="ECO:0007669"/>
    <property type="project" value="UniProtKB-KW"/>
</dbReference>
<dbReference type="GO" id="GO:0003735">
    <property type="term" value="F:structural constituent of ribosome"/>
    <property type="evidence" value="ECO:0007669"/>
    <property type="project" value="InterPro"/>
</dbReference>
<dbReference type="GO" id="GO:0006412">
    <property type="term" value="P:translation"/>
    <property type="evidence" value="ECO:0007669"/>
    <property type="project" value="UniProtKB-UniRule"/>
</dbReference>
<dbReference type="HAMAP" id="MF_00251">
    <property type="entry name" value="Ribosomal_bL36"/>
    <property type="match status" value="1"/>
</dbReference>
<dbReference type="InterPro" id="IPR000473">
    <property type="entry name" value="Ribosomal_bL36"/>
</dbReference>
<dbReference type="InterPro" id="IPR035977">
    <property type="entry name" value="Ribosomal_bL36_sp"/>
</dbReference>
<dbReference type="NCBIfam" id="TIGR01022">
    <property type="entry name" value="rpmJ_bact"/>
    <property type="match status" value="1"/>
</dbReference>
<dbReference type="PANTHER" id="PTHR42888">
    <property type="entry name" value="50S RIBOSOMAL PROTEIN L36, CHLOROPLASTIC"/>
    <property type="match status" value="1"/>
</dbReference>
<dbReference type="PANTHER" id="PTHR42888:SF1">
    <property type="entry name" value="LARGE RIBOSOMAL SUBUNIT PROTEIN BL36C"/>
    <property type="match status" value="1"/>
</dbReference>
<dbReference type="Pfam" id="PF00444">
    <property type="entry name" value="Ribosomal_L36"/>
    <property type="match status" value="1"/>
</dbReference>
<dbReference type="SUPFAM" id="SSF57840">
    <property type="entry name" value="Ribosomal protein L36"/>
    <property type="match status" value="1"/>
</dbReference>
<dbReference type="PROSITE" id="PS00828">
    <property type="entry name" value="RIBOSOMAL_L36"/>
    <property type="match status" value="1"/>
</dbReference>
<sequence>MKVRASVKKICRNCKVIKRNGVVRVICSEPKHKQRQG</sequence>
<feature type="chain" id="PRO_0000344727" description="Large ribosomal subunit protein bL36B">
    <location>
        <begin position="1"/>
        <end position="37"/>
    </location>
</feature>
<evidence type="ECO:0000255" key="1">
    <source>
        <dbReference type="HAMAP-Rule" id="MF_00251"/>
    </source>
</evidence>
<evidence type="ECO:0000305" key="2"/>
<gene>
    <name evidence="1" type="primary">rpmJ2</name>
    <name type="synonym">rpmJ</name>
    <name type="ordered locus">VC0395_A2153</name>
    <name type="ordered locus">VC395_2688</name>
</gene>
<reference key="1">
    <citation type="submission" date="2007-03" db="EMBL/GenBank/DDBJ databases">
        <authorList>
            <person name="Heidelberg J."/>
        </authorList>
    </citation>
    <scope>NUCLEOTIDE SEQUENCE [LARGE SCALE GENOMIC DNA]</scope>
    <source>
        <strain>ATCC 39541 / Classical Ogawa 395 / O395</strain>
    </source>
</reference>
<reference key="2">
    <citation type="journal article" date="2008" name="PLoS ONE">
        <title>A recalibrated molecular clock and independent origins for the cholera pandemic clones.</title>
        <authorList>
            <person name="Feng L."/>
            <person name="Reeves P.R."/>
            <person name="Lan R."/>
            <person name="Ren Y."/>
            <person name="Gao C."/>
            <person name="Zhou Z."/>
            <person name="Ren Y."/>
            <person name="Cheng J."/>
            <person name="Wang W."/>
            <person name="Wang J."/>
            <person name="Qian W."/>
            <person name="Li D."/>
            <person name="Wang L."/>
        </authorList>
    </citation>
    <scope>NUCLEOTIDE SEQUENCE [LARGE SCALE GENOMIC DNA]</scope>
    <source>
        <strain>ATCC 39541 / Classical Ogawa 395 / O395</strain>
    </source>
</reference>
<accession>A5F559</accession>
<accession>C3LXH4</accession>
<comment type="similarity">
    <text evidence="1">Belongs to the bacterial ribosomal protein bL36 family.</text>
</comment>
<keyword id="KW-0687">Ribonucleoprotein</keyword>
<keyword id="KW-0689">Ribosomal protein</keyword>
<organism>
    <name type="scientific">Vibrio cholerae serotype O1 (strain ATCC 39541 / Classical Ogawa 395 / O395)</name>
    <dbReference type="NCBI Taxonomy" id="345073"/>
    <lineage>
        <taxon>Bacteria</taxon>
        <taxon>Pseudomonadati</taxon>
        <taxon>Pseudomonadota</taxon>
        <taxon>Gammaproteobacteria</taxon>
        <taxon>Vibrionales</taxon>
        <taxon>Vibrionaceae</taxon>
        <taxon>Vibrio</taxon>
    </lineage>
</organism>